<organism>
    <name type="scientific">Pseudomonas fluorescens (strain SBW25)</name>
    <dbReference type="NCBI Taxonomy" id="216595"/>
    <lineage>
        <taxon>Bacteria</taxon>
        <taxon>Pseudomonadati</taxon>
        <taxon>Pseudomonadota</taxon>
        <taxon>Gammaproteobacteria</taxon>
        <taxon>Pseudomonadales</taxon>
        <taxon>Pseudomonadaceae</taxon>
        <taxon>Pseudomonas</taxon>
    </lineage>
</organism>
<name>SYFA_PSEFS</name>
<keyword id="KW-0030">Aminoacyl-tRNA synthetase</keyword>
<keyword id="KW-0067">ATP-binding</keyword>
<keyword id="KW-0963">Cytoplasm</keyword>
<keyword id="KW-0436">Ligase</keyword>
<keyword id="KW-0460">Magnesium</keyword>
<keyword id="KW-0479">Metal-binding</keyword>
<keyword id="KW-0547">Nucleotide-binding</keyword>
<keyword id="KW-0648">Protein biosynthesis</keyword>
<feature type="chain" id="PRO_1000204833" description="Phenylalanine--tRNA ligase alpha subunit">
    <location>
        <begin position="1"/>
        <end position="338"/>
    </location>
</feature>
<feature type="binding site" evidence="1">
    <location>
        <position position="252"/>
    </location>
    <ligand>
        <name>Mg(2+)</name>
        <dbReference type="ChEBI" id="CHEBI:18420"/>
        <note>shared with beta subunit</note>
    </ligand>
</feature>
<evidence type="ECO:0000255" key="1">
    <source>
        <dbReference type="HAMAP-Rule" id="MF_00281"/>
    </source>
</evidence>
<protein>
    <recommendedName>
        <fullName evidence="1">Phenylalanine--tRNA ligase alpha subunit</fullName>
        <ecNumber evidence="1">6.1.1.20</ecNumber>
    </recommendedName>
    <alternativeName>
        <fullName evidence="1">Phenylalanyl-tRNA synthetase alpha subunit</fullName>
        <shortName evidence="1">PheRS</shortName>
    </alternativeName>
</protein>
<sequence>MENLDALVAQALEAVQSAEDVNALEQIRVHYLGKKGELTQVMKTLGNLPAEERPQVGALINVAKERVTEVLNARKASLEEADLAAKLAAESIDVTLPGRGQASGGLHPITRTLERIEQFFTHIGYGIAEGPEVEDDYHNFEALNIPGHHPARSMHDTFYFNANMLLRTHTSPVQVRTMEANKPPIRIVCPGRVYRSDSDITHSPMFHQVEGLLVDRDINFADLKGTIEEFLRVFFEKELAVRFRPSFFPFTEPSAEVDMECVMCSGKGCRVCKQTGWLEVMGCGMVHPNVLRMSGIDPEEFSGFAFGMGVERLAMLRYGVNDLRLFFDNDLRFLAQFR</sequence>
<dbReference type="EC" id="6.1.1.20" evidence="1"/>
<dbReference type="EMBL" id="AM181176">
    <property type="protein sequence ID" value="CAY50637.1"/>
    <property type="molecule type" value="Genomic_DNA"/>
</dbReference>
<dbReference type="RefSeq" id="WP_003192486.1">
    <property type="nucleotide sequence ID" value="NC_012660.1"/>
</dbReference>
<dbReference type="SMR" id="C3JZN3"/>
<dbReference type="STRING" id="294.SRM1_02093"/>
<dbReference type="GeneID" id="93465724"/>
<dbReference type="eggNOG" id="COG0016">
    <property type="taxonomic scope" value="Bacteria"/>
</dbReference>
<dbReference type="HOGENOM" id="CLU_025086_0_1_6"/>
<dbReference type="OrthoDB" id="9800719at2"/>
<dbReference type="GO" id="GO:0005737">
    <property type="term" value="C:cytoplasm"/>
    <property type="evidence" value="ECO:0007669"/>
    <property type="project" value="UniProtKB-SubCell"/>
</dbReference>
<dbReference type="GO" id="GO:0005524">
    <property type="term" value="F:ATP binding"/>
    <property type="evidence" value="ECO:0007669"/>
    <property type="project" value="UniProtKB-UniRule"/>
</dbReference>
<dbReference type="GO" id="GO:0000287">
    <property type="term" value="F:magnesium ion binding"/>
    <property type="evidence" value="ECO:0007669"/>
    <property type="project" value="UniProtKB-UniRule"/>
</dbReference>
<dbReference type="GO" id="GO:0004826">
    <property type="term" value="F:phenylalanine-tRNA ligase activity"/>
    <property type="evidence" value="ECO:0007669"/>
    <property type="project" value="UniProtKB-UniRule"/>
</dbReference>
<dbReference type="GO" id="GO:0000049">
    <property type="term" value="F:tRNA binding"/>
    <property type="evidence" value="ECO:0007669"/>
    <property type="project" value="InterPro"/>
</dbReference>
<dbReference type="GO" id="GO:0006432">
    <property type="term" value="P:phenylalanyl-tRNA aminoacylation"/>
    <property type="evidence" value="ECO:0007669"/>
    <property type="project" value="UniProtKB-UniRule"/>
</dbReference>
<dbReference type="CDD" id="cd00496">
    <property type="entry name" value="PheRS_alpha_core"/>
    <property type="match status" value="1"/>
</dbReference>
<dbReference type="FunFam" id="3.30.930.10:FF:000003">
    <property type="entry name" value="Phenylalanine--tRNA ligase alpha subunit"/>
    <property type="match status" value="1"/>
</dbReference>
<dbReference type="Gene3D" id="3.30.930.10">
    <property type="entry name" value="Bira Bifunctional Protein, Domain 2"/>
    <property type="match status" value="1"/>
</dbReference>
<dbReference type="HAMAP" id="MF_00281">
    <property type="entry name" value="Phe_tRNA_synth_alpha1"/>
    <property type="match status" value="1"/>
</dbReference>
<dbReference type="InterPro" id="IPR006195">
    <property type="entry name" value="aa-tRNA-synth_II"/>
</dbReference>
<dbReference type="InterPro" id="IPR045864">
    <property type="entry name" value="aa-tRNA-synth_II/BPL/LPL"/>
</dbReference>
<dbReference type="InterPro" id="IPR004529">
    <property type="entry name" value="Phe-tRNA-synth_IIc_asu"/>
</dbReference>
<dbReference type="InterPro" id="IPR004188">
    <property type="entry name" value="Phe-tRNA_ligase_II_N"/>
</dbReference>
<dbReference type="InterPro" id="IPR022911">
    <property type="entry name" value="Phe_tRNA_ligase_alpha1_bac"/>
</dbReference>
<dbReference type="InterPro" id="IPR002319">
    <property type="entry name" value="Phenylalanyl-tRNA_Synthase"/>
</dbReference>
<dbReference type="InterPro" id="IPR010978">
    <property type="entry name" value="tRNA-bd_arm"/>
</dbReference>
<dbReference type="NCBIfam" id="TIGR00468">
    <property type="entry name" value="pheS"/>
    <property type="match status" value="1"/>
</dbReference>
<dbReference type="PANTHER" id="PTHR11538:SF41">
    <property type="entry name" value="PHENYLALANINE--TRNA LIGASE, MITOCHONDRIAL"/>
    <property type="match status" value="1"/>
</dbReference>
<dbReference type="PANTHER" id="PTHR11538">
    <property type="entry name" value="PHENYLALANYL-TRNA SYNTHETASE"/>
    <property type="match status" value="1"/>
</dbReference>
<dbReference type="Pfam" id="PF02912">
    <property type="entry name" value="Phe_tRNA-synt_N"/>
    <property type="match status" value="1"/>
</dbReference>
<dbReference type="Pfam" id="PF01409">
    <property type="entry name" value="tRNA-synt_2d"/>
    <property type="match status" value="1"/>
</dbReference>
<dbReference type="SUPFAM" id="SSF55681">
    <property type="entry name" value="Class II aaRS and biotin synthetases"/>
    <property type="match status" value="1"/>
</dbReference>
<dbReference type="SUPFAM" id="SSF46589">
    <property type="entry name" value="tRNA-binding arm"/>
    <property type="match status" value="1"/>
</dbReference>
<dbReference type="PROSITE" id="PS50862">
    <property type="entry name" value="AA_TRNA_LIGASE_II"/>
    <property type="match status" value="1"/>
</dbReference>
<reference key="1">
    <citation type="journal article" date="2009" name="Genome Biol.">
        <title>Genomic and genetic analyses of diversity and plant interactions of Pseudomonas fluorescens.</title>
        <authorList>
            <person name="Silby M.W."/>
            <person name="Cerdeno-Tarraga A.M."/>
            <person name="Vernikos G.S."/>
            <person name="Giddens S.R."/>
            <person name="Jackson R.W."/>
            <person name="Preston G.M."/>
            <person name="Zhang X.-X."/>
            <person name="Moon C.D."/>
            <person name="Gehrig S.M."/>
            <person name="Godfrey S.A.C."/>
            <person name="Knight C.G."/>
            <person name="Malone J.G."/>
            <person name="Robinson Z."/>
            <person name="Spiers A.J."/>
            <person name="Harris S."/>
            <person name="Challis G.L."/>
            <person name="Yaxley A.M."/>
            <person name="Harris D."/>
            <person name="Seeger K."/>
            <person name="Murphy L."/>
            <person name="Rutter S."/>
            <person name="Squares R."/>
            <person name="Quail M.A."/>
            <person name="Saunders E."/>
            <person name="Mavromatis K."/>
            <person name="Brettin T.S."/>
            <person name="Bentley S.D."/>
            <person name="Hothersall J."/>
            <person name="Stephens E."/>
            <person name="Thomas C.M."/>
            <person name="Parkhill J."/>
            <person name="Levy S.B."/>
            <person name="Rainey P.B."/>
            <person name="Thomson N.R."/>
        </authorList>
    </citation>
    <scope>NUCLEOTIDE SEQUENCE [LARGE SCALE GENOMIC DNA]</scope>
    <source>
        <strain>SBW25</strain>
    </source>
</reference>
<comment type="catalytic activity">
    <reaction evidence="1">
        <text>tRNA(Phe) + L-phenylalanine + ATP = L-phenylalanyl-tRNA(Phe) + AMP + diphosphate + H(+)</text>
        <dbReference type="Rhea" id="RHEA:19413"/>
        <dbReference type="Rhea" id="RHEA-COMP:9668"/>
        <dbReference type="Rhea" id="RHEA-COMP:9699"/>
        <dbReference type="ChEBI" id="CHEBI:15378"/>
        <dbReference type="ChEBI" id="CHEBI:30616"/>
        <dbReference type="ChEBI" id="CHEBI:33019"/>
        <dbReference type="ChEBI" id="CHEBI:58095"/>
        <dbReference type="ChEBI" id="CHEBI:78442"/>
        <dbReference type="ChEBI" id="CHEBI:78531"/>
        <dbReference type="ChEBI" id="CHEBI:456215"/>
        <dbReference type="EC" id="6.1.1.20"/>
    </reaction>
</comment>
<comment type="cofactor">
    <cofactor evidence="1">
        <name>Mg(2+)</name>
        <dbReference type="ChEBI" id="CHEBI:18420"/>
    </cofactor>
    <text evidence="1">Binds 2 magnesium ions per tetramer.</text>
</comment>
<comment type="subunit">
    <text evidence="1">Tetramer of two alpha and two beta subunits.</text>
</comment>
<comment type="subcellular location">
    <subcellularLocation>
        <location evidence="1">Cytoplasm</location>
    </subcellularLocation>
</comment>
<comment type="similarity">
    <text evidence="1">Belongs to the class-II aminoacyl-tRNA synthetase family. Phe-tRNA synthetase alpha subunit type 1 subfamily.</text>
</comment>
<accession>C3JZN3</accession>
<gene>
    <name evidence="1" type="primary">pheS</name>
    <name type="ordered locus">PFLU_4144</name>
</gene>
<proteinExistence type="inferred from homology"/>